<feature type="chain" id="PRO_0000295890" description="Dual specificity phosphatase 29">
    <location>
        <begin position="1"/>
        <end position="211"/>
    </location>
</feature>
<feature type="domain" description="Tyrosine-protein phosphatase" evidence="3">
    <location>
        <begin position="47"/>
        <end position="192"/>
    </location>
</feature>
<feature type="active site" description="Phosphocysteine intermediate" evidence="3">
    <location>
        <position position="137"/>
    </location>
</feature>
<feature type="binding site" evidence="1">
    <location>
        <begin position="136"/>
        <end position="143"/>
    </location>
    <ligand>
        <name>substrate</name>
    </ligand>
</feature>
<keyword id="KW-0963">Cytoplasm</keyword>
<keyword id="KW-0378">Hydrolase</keyword>
<keyword id="KW-0539">Nucleus</keyword>
<keyword id="KW-0904">Protein phosphatase</keyword>
<keyword id="KW-1185">Reference proteome</keyword>
<organism>
    <name type="scientific">Callorhinchus milii</name>
    <name type="common">Ghost shark</name>
    <dbReference type="NCBI Taxonomy" id="7868"/>
    <lineage>
        <taxon>Eukaryota</taxon>
        <taxon>Metazoa</taxon>
        <taxon>Chordata</taxon>
        <taxon>Craniata</taxon>
        <taxon>Vertebrata</taxon>
        <taxon>Chondrichthyes</taxon>
        <taxon>Holocephali</taxon>
        <taxon>Chimaeriformes</taxon>
        <taxon>Callorhinchidae</taxon>
        <taxon>Callorhinchus</taxon>
    </lineage>
</organism>
<proteinExistence type="inferred from homology"/>
<sequence length="211" mass="23989">MSSAGIPIQKKKNAYSAVKVDPNDDYATPGAFELERLFWKGSAKYTHVNEVWPGIYIGDETARDKATLQRLKITHILNSAHGKFNINTGANYYKDMLIHYYGIEAFDSPDFNLSVFFYSAAKFIRAGLNTPKLLVHCAMGRSRSATLVLAYLMIYKNMTVVDAIQEVIQRRCILPNRGFLKQLRTLDIQLAIERSNRRNGIKNNGEEKEAY</sequence>
<name>DUS29_CALMI</name>
<protein>
    <recommendedName>
        <fullName>Dual specificity phosphatase 29</fullName>
    </recommendedName>
    <alternativeName>
        <fullName>Dual specificity phosphatase DUPD1</fullName>
        <ecNumber evidence="1">3.1.3.16</ecNumber>
        <ecNumber evidence="1">3.1.3.48</ecNumber>
    </alternativeName>
</protein>
<accession>P0C5A2</accession>
<gene>
    <name type="primary">dusp29</name>
    <name type="synonym">dupd1</name>
</gene>
<evidence type="ECO:0000250" key="1">
    <source>
        <dbReference type="UniProtKB" id="Q68J44"/>
    </source>
</evidence>
<evidence type="ECO:0000250" key="2">
    <source>
        <dbReference type="UniProtKB" id="Q8BK84"/>
    </source>
</evidence>
<evidence type="ECO:0000255" key="3">
    <source>
        <dbReference type="PROSITE-ProRule" id="PRU00160"/>
    </source>
</evidence>
<evidence type="ECO:0000305" key="4"/>
<comment type="function">
    <text evidence="1">Dual specificity phosphatase able to dephosphorylate phosphotyrosine, phosphoserine and phosphothreonine residues within the same substrate, with a preference for phosphotyrosine as a substrate. Involved in the modulation of AMPK and MAPK1/2 signaling pathways.</text>
</comment>
<comment type="catalytic activity">
    <reaction evidence="1">
        <text>O-phospho-L-tyrosyl-[protein] + H2O = L-tyrosyl-[protein] + phosphate</text>
        <dbReference type="Rhea" id="RHEA:10684"/>
        <dbReference type="Rhea" id="RHEA-COMP:10136"/>
        <dbReference type="Rhea" id="RHEA-COMP:20101"/>
        <dbReference type="ChEBI" id="CHEBI:15377"/>
        <dbReference type="ChEBI" id="CHEBI:43474"/>
        <dbReference type="ChEBI" id="CHEBI:46858"/>
        <dbReference type="ChEBI" id="CHEBI:61978"/>
        <dbReference type="EC" id="3.1.3.48"/>
    </reaction>
</comment>
<comment type="catalytic activity">
    <reaction evidence="1">
        <text>O-phospho-L-seryl-[protein] + H2O = L-seryl-[protein] + phosphate</text>
        <dbReference type="Rhea" id="RHEA:20629"/>
        <dbReference type="Rhea" id="RHEA-COMP:9863"/>
        <dbReference type="Rhea" id="RHEA-COMP:11604"/>
        <dbReference type="ChEBI" id="CHEBI:15377"/>
        <dbReference type="ChEBI" id="CHEBI:29999"/>
        <dbReference type="ChEBI" id="CHEBI:43474"/>
        <dbReference type="ChEBI" id="CHEBI:83421"/>
        <dbReference type="EC" id="3.1.3.16"/>
    </reaction>
</comment>
<comment type="catalytic activity">
    <reaction evidence="1">
        <text>O-phospho-L-threonyl-[protein] + H2O = L-threonyl-[protein] + phosphate</text>
        <dbReference type="Rhea" id="RHEA:47004"/>
        <dbReference type="Rhea" id="RHEA-COMP:11060"/>
        <dbReference type="Rhea" id="RHEA-COMP:11605"/>
        <dbReference type="ChEBI" id="CHEBI:15377"/>
        <dbReference type="ChEBI" id="CHEBI:30013"/>
        <dbReference type="ChEBI" id="CHEBI:43474"/>
        <dbReference type="ChEBI" id="CHEBI:61977"/>
        <dbReference type="EC" id="3.1.3.16"/>
    </reaction>
</comment>
<comment type="subcellular location">
    <subcellularLocation>
        <location evidence="1">Cytoplasm</location>
    </subcellularLocation>
    <subcellularLocation>
        <location evidence="2">Nucleus</location>
    </subcellularLocation>
</comment>
<comment type="similarity">
    <text evidence="4">Belongs to the protein-tyrosine phosphatase family. Non-receptor class dual specificity subfamily.</text>
</comment>
<reference key="1">
    <citation type="journal article" date="2006" name="Science">
        <title>Ancient noncoding elements conserved in the human genome.</title>
        <authorList>
            <person name="Venkatesh B."/>
            <person name="Kirkness E.F."/>
            <person name="Loh Y.H."/>
            <person name="Halpern A.L."/>
            <person name="Lee A.P."/>
            <person name="Johnson J."/>
            <person name="Dandona N."/>
            <person name="Viswanathan L.D."/>
            <person name="Tay A."/>
            <person name="Venter J.C."/>
            <person name="Strausberg R.L."/>
            <person name="Brenner S."/>
        </authorList>
    </citation>
    <scope>NUCLEOTIDE SEQUENCE [LARGE SCALE GENOMIC DNA]</scope>
</reference>
<dbReference type="EC" id="3.1.3.16" evidence="1"/>
<dbReference type="EC" id="3.1.3.48" evidence="1"/>
<dbReference type="EMBL" id="AAVX01008311">
    <property type="status" value="NOT_ANNOTATED_CDS"/>
    <property type="molecule type" value="Genomic_DNA"/>
</dbReference>
<dbReference type="EMBL" id="AAVX01069458">
    <property type="status" value="NOT_ANNOTATED_CDS"/>
    <property type="molecule type" value="Genomic_DNA"/>
</dbReference>
<dbReference type="SMR" id="P0C5A2"/>
<dbReference type="FunCoup" id="P0C5A2">
    <property type="interactions" value="29"/>
</dbReference>
<dbReference type="STRING" id="7868.ENSCMIP00000020259"/>
<dbReference type="InParanoid" id="P0C5A2"/>
<dbReference type="Proteomes" id="UP000314986">
    <property type="component" value="Unassembled WGS sequence"/>
</dbReference>
<dbReference type="GO" id="GO:0005737">
    <property type="term" value="C:cytoplasm"/>
    <property type="evidence" value="ECO:0000250"/>
    <property type="project" value="UniProtKB"/>
</dbReference>
<dbReference type="GO" id="GO:0005634">
    <property type="term" value="C:nucleus"/>
    <property type="evidence" value="ECO:0000250"/>
    <property type="project" value="UniProtKB"/>
</dbReference>
<dbReference type="GO" id="GO:0033549">
    <property type="term" value="F:MAP kinase phosphatase activity"/>
    <property type="evidence" value="ECO:0007669"/>
    <property type="project" value="TreeGrafter"/>
</dbReference>
<dbReference type="GO" id="GO:0004722">
    <property type="term" value="F:protein serine/threonine phosphatase activity"/>
    <property type="evidence" value="ECO:0007669"/>
    <property type="project" value="UniProtKB-EC"/>
</dbReference>
<dbReference type="GO" id="GO:0004725">
    <property type="term" value="F:protein tyrosine phosphatase activity"/>
    <property type="evidence" value="ECO:0007669"/>
    <property type="project" value="UniProtKB-EC"/>
</dbReference>
<dbReference type="GO" id="GO:0008138">
    <property type="term" value="F:protein tyrosine/serine/threonine phosphatase activity"/>
    <property type="evidence" value="ECO:0000250"/>
    <property type="project" value="UniProtKB"/>
</dbReference>
<dbReference type="GO" id="GO:0043409">
    <property type="term" value="P:negative regulation of MAPK cascade"/>
    <property type="evidence" value="ECO:0007669"/>
    <property type="project" value="TreeGrafter"/>
</dbReference>
<dbReference type="GO" id="GO:0006470">
    <property type="term" value="P:protein dephosphorylation"/>
    <property type="evidence" value="ECO:0000250"/>
    <property type="project" value="UniProtKB"/>
</dbReference>
<dbReference type="CDD" id="cd14575">
    <property type="entry name" value="DUPD1"/>
    <property type="match status" value="1"/>
</dbReference>
<dbReference type="FunFam" id="3.90.190.10:FF:000037">
    <property type="entry name" value="dual specificity protein phosphatase 26"/>
    <property type="match status" value="1"/>
</dbReference>
<dbReference type="Gene3D" id="3.90.190.10">
    <property type="entry name" value="Protein tyrosine phosphatase superfamily"/>
    <property type="match status" value="1"/>
</dbReference>
<dbReference type="InterPro" id="IPR020405">
    <property type="entry name" value="Atypical_DUSP_subfamA"/>
</dbReference>
<dbReference type="InterPro" id="IPR000340">
    <property type="entry name" value="Dual-sp_phosphatase_cat-dom"/>
</dbReference>
<dbReference type="InterPro" id="IPR029021">
    <property type="entry name" value="Prot-tyrosine_phosphatase-like"/>
</dbReference>
<dbReference type="InterPro" id="IPR016130">
    <property type="entry name" value="Tyr_Pase_AS"/>
</dbReference>
<dbReference type="InterPro" id="IPR000387">
    <property type="entry name" value="Tyr_Pase_dom"/>
</dbReference>
<dbReference type="InterPro" id="IPR020422">
    <property type="entry name" value="TYR_PHOSPHATASE_DUAL_dom"/>
</dbReference>
<dbReference type="PANTHER" id="PTHR45682">
    <property type="entry name" value="AGAP008228-PA"/>
    <property type="match status" value="1"/>
</dbReference>
<dbReference type="PANTHER" id="PTHR45682:SF6">
    <property type="entry name" value="DUAL SPECIFICITY PHOSPHATASE 29"/>
    <property type="match status" value="1"/>
</dbReference>
<dbReference type="Pfam" id="PF00782">
    <property type="entry name" value="DSPc"/>
    <property type="match status" value="1"/>
</dbReference>
<dbReference type="PRINTS" id="PR01908">
    <property type="entry name" value="ADSPHPHTASE"/>
</dbReference>
<dbReference type="PRINTS" id="PR01909">
    <property type="entry name" value="ADSPHPHTASEA"/>
</dbReference>
<dbReference type="SMART" id="SM00195">
    <property type="entry name" value="DSPc"/>
    <property type="match status" value="1"/>
</dbReference>
<dbReference type="SUPFAM" id="SSF52799">
    <property type="entry name" value="(Phosphotyrosine protein) phosphatases II"/>
    <property type="match status" value="1"/>
</dbReference>
<dbReference type="PROSITE" id="PS00383">
    <property type="entry name" value="TYR_PHOSPHATASE_1"/>
    <property type="match status" value="1"/>
</dbReference>
<dbReference type="PROSITE" id="PS50056">
    <property type="entry name" value="TYR_PHOSPHATASE_2"/>
    <property type="match status" value="1"/>
</dbReference>
<dbReference type="PROSITE" id="PS50054">
    <property type="entry name" value="TYR_PHOSPHATASE_DUAL"/>
    <property type="match status" value="1"/>
</dbReference>